<organism>
    <name type="scientific">Bos taurus</name>
    <name type="common">Bovine</name>
    <dbReference type="NCBI Taxonomy" id="9913"/>
    <lineage>
        <taxon>Eukaryota</taxon>
        <taxon>Metazoa</taxon>
        <taxon>Chordata</taxon>
        <taxon>Craniata</taxon>
        <taxon>Vertebrata</taxon>
        <taxon>Euteleostomi</taxon>
        <taxon>Mammalia</taxon>
        <taxon>Eutheria</taxon>
        <taxon>Laurasiatheria</taxon>
        <taxon>Artiodactyla</taxon>
        <taxon>Ruminantia</taxon>
        <taxon>Pecora</taxon>
        <taxon>Bovidae</taxon>
        <taxon>Bovinae</taxon>
        <taxon>Bos</taxon>
    </lineage>
</organism>
<name>SMC1A_BOVIN</name>
<gene>
    <name type="primary">SMC1A</name>
    <name type="synonym">SMC1</name>
    <name type="synonym">SMC1L1</name>
</gene>
<sequence>MGFLKLIEIENFKSYKGRQIIGPFQRFTAIIGPNGSGKSNLMDAISFVLGEKTSNLRVKTLRDLIHGAPVGKPAANRAFVSMVYSEEGAEDRTFARVIVGGSSEYKINNKVVQLHEYSEELEKLGILIKARNFLVFQGAVESIAMKNPKERTALFEEISRSGELAQEYDKRKKEMVKAEEDTQFNYHRKKNIAAERKEAKQEKEEADRYQRLKDEVVRAQVQLQLFKLYHNEVEIEKLNKELASKNKEIEKDKKRMDKVEDELKEKKKELGKMMREQQQIEKEIKEKDSELNQKRPQYIKAKENTSHKIKKLEAAKKSLQNAQKHYKKRKGDMDELEKEMLSVEKARQEFEERMEEESQSQGRDLTLEENQVKKYHRLKEEASKRAATLAQELEKFNRDQKADQDRLDLEERKKVETEAKIKQKLREIEENQKRIEKLEEYITTSKQSLEEQKKLEGELTEEVEMAKRRIDEINKELNQVMEQLGDARIDRQESSRQQRKAEIMESIKRLYPGSVYGRLIDLCQPTQKKYQIAVTKVLGKNMDAIIVDSEKTGRDCIQYIKEQRGEPETFLPLDYLEVKPTDEKLRELKGAKLVIDVIRYEPPHIKKALQYACGNALVCDNVEDARRIAFGGHQRHKTVALDGTLFQKSGVISGGASDLKAKARRWDEKAVDKLKEKKERLTEELKEQMKAKRKEAELRQVQSQAHGLQMRLKYSQSDLEQTKTRHLALNLQEKSKLESELANFGPRINDIKRIIQSREREMKDLKEKMNQVEDEVFEEFCREIGVRNIREFEEEKVKRQNEIAKKRLEFENQKTRLGIQLDFEKNQLKEDQDKVHMWEQTVKKDENEIEKLKKEEQRHMKIIDETMAQLQDLKNQHLAKKSEVNDKNHEMEEIRKKLGGANKEMTHLQKEVTAIETKLEQKRSDRHNLLQACKMQDIKLPLSKGTMDDISQEEGSSQGEDSVSGSQRTSNIYAREALIEIDYGDLCEDLKDAQAEEEIKQEMNTLQQKLNEQQSVLQRIAAPNMKAMEKLESVRDKFQETSDEFEAARKRAKKAKQAFEQIKKERFDRFNACFESVATNIDEIYKALSRNSSAQAFLGPENPEEPYLDGINYNCVAPGKRFRPMDNLSGGEKTVAALALLFAIHSYKPAPFFVLDEIDAALDNTNIGKVANYIKEQSTCNFQAIVISLKEEFYTKAESLIGVYPEQGDCVISKVLTFDLTKYPDANPNPNEQ</sequence>
<evidence type="ECO:0000250" key="1"/>
<evidence type="ECO:0000250" key="2">
    <source>
        <dbReference type="UniProtKB" id="Q14683"/>
    </source>
</evidence>
<evidence type="ECO:0000250" key="3">
    <source>
        <dbReference type="UniProtKB" id="Q9CU62"/>
    </source>
</evidence>
<evidence type="ECO:0000250" key="4">
    <source>
        <dbReference type="UniProtKB" id="Q9Z1M9"/>
    </source>
</evidence>
<evidence type="ECO:0000255" key="5"/>
<evidence type="ECO:0000256" key="6">
    <source>
        <dbReference type="SAM" id="MobiDB-lite"/>
    </source>
</evidence>
<evidence type="ECO:0000269" key="7">
    <source>
    </source>
</evidence>
<evidence type="ECO:0000269" key="8">
    <source>
    </source>
</evidence>
<evidence type="ECO:0000269" key="9">
    <source>
    </source>
</evidence>
<evidence type="ECO:0000305" key="10"/>
<dbReference type="EMBL" id="AF072712">
    <property type="protein sequence ID" value="AAD13141.1"/>
    <property type="molecule type" value="mRNA"/>
</dbReference>
<dbReference type="PIR" id="S71602">
    <property type="entry name" value="S71602"/>
</dbReference>
<dbReference type="RefSeq" id="NP_777039.1">
    <property type="nucleotide sequence ID" value="NM_174614.1"/>
</dbReference>
<dbReference type="SMR" id="O97593"/>
<dbReference type="BioGRID" id="159631">
    <property type="interactions" value="1"/>
</dbReference>
<dbReference type="CORUM" id="O97593"/>
<dbReference type="FunCoup" id="O97593">
    <property type="interactions" value="3954"/>
</dbReference>
<dbReference type="STRING" id="9913.ENSBTAP00000023619"/>
<dbReference type="PaxDb" id="9913-ENSBTAP00000023619"/>
<dbReference type="Ensembl" id="ENSBTAT00000113776.1">
    <property type="protein sequence ID" value="ENSBTAP00000090290.1"/>
    <property type="gene ID" value="ENSBTAG00000017761.5"/>
</dbReference>
<dbReference type="GeneID" id="282370"/>
<dbReference type="KEGG" id="bta:282370"/>
<dbReference type="CTD" id="8243"/>
<dbReference type="VEuPathDB" id="HostDB:ENSBTAG00000017761"/>
<dbReference type="VGNC" id="VGNC:34997">
    <property type="gene designation" value="SMC1A"/>
</dbReference>
<dbReference type="eggNOG" id="KOG0018">
    <property type="taxonomic scope" value="Eukaryota"/>
</dbReference>
<dbReference type="GeneTree" id="ENSGT00940000155614"/>
<dbReference type="HOGENOM" id="CLU_001042_0_2_1"/>
<dbReference type="InParanoid" id="O97593"/>
<dbReference type="OMA" id="KHMDFQR"/>
<dbReference type="OrthoDB" id="413649at2759"/>
<dbReference type="Reactome" id="R-BTA-2467813">
    <property type="pathway name" value="Separation of Sister Chromatids"/>
</dbReference>
<dbReference type="Reactome" id="R-BTA-2468052">
    <property type="pathway name" value="Establishment of Sister Chromatid Cohesion"/>
</dbReference>
<dbReference type="Reactome" id="R-BTA-2470946">
    <property type="pathway name" value="Cohesin Loading onto Chromatin"/>
</dbReference>
<dbReference type="Reactome" id="R-BTA-2500257">
    <property type="pathway name" value="Resolution of Sister Chromatid Cohesion"/>
</dbReference>
<dbReference type="Reactome" id="R-BTA-3108214">
    <property type="pathway name" value="SUMOylation of DNA damage response and repair proteins"/>
</dbReference>
<dbReference type="Proteomes" id="UP000009136">
    <property type="component" value="Chromosome X"/>
</dbReference>
<dbReference type="Bgee" id="ENSBTAG00000017761">
    <property type="expression patterns" value="Expressed in ileum and 113 other cell types or tissues"/>
</dbReference>
<dbReference type="GO" id="GO:0000776">
    <property type="term" value="C:kinetochore"/>
    <property type="evidence" value="ECO:0000250"/>
    <property type="project" value="UniProtKB"/>
</dbReference>
<dbReference type="GO" id="GO:0030893">
    <property type="term" value="C:meiotic cohesin complex"/>
    <property type="evidence" value="ECO:0000250"/>
    <property type="project" value="UniProtKB"/>
</dbReference>
<dbReference type="GO" id="GO:0031981">
    <property type="term" value="C:nuclear lumen"/>
    <property type="evidence" value="ECO:0007669"/>
    <property type="project" value="UniProtKB-ARBA"/>
</dbReference>
<dbReference type="GO" id="GO:0005634">
    <property type="term" value="C:nucleus"/>
    <property type="evidence" value="ECO:0000250"/>
    <property type="project" value="UniProtKB"/>
</dbReference>
<dbReference type="GO" id="GO:0005524">
    <property type="term" value="F:ATP binding"/>
    <property type="evidence" value="ECO:0007669"/>
    <property type="project" value="UniProtKB-KW"/>
</dbReference>
<dbReference type="GO" id="GO:0016887">
    <property type="term" value="F:ATP hydrolysis activity"/>
    <property type="evidence" value="ECO:0007669"/>
    <property type="project" value="InterPro"/>
</dbReference>
<dbReference type="GO" id="GO:0003682">
    <property type="term" value="F:chromatin binding"/>
    <property type="evidence" value="ECO:0000250"/>
    <property type="project" value="UniProtKB"/>
</dbReference>
<dbReference type="GO" id="GO:0003677">
    <property type="term" value="F:DNA binding"/>
    <property type="evidence" value="ECO:0000318"/>
    <property type="project" value="GO_Central"/>
</dbReference>
<dbReference type="GO" id="GO:0051301">
    <property type="term" value="P:cell division"/>
    <property type="evidence" value="ECO:0007669"/>
    <property type="project" value="UniProtKB-KW"/>
</dbReference>
<dbReference type="GO" id="GO:0006281">
    <property type="term" value="P:DNA repair"/>
    <property type="evidence" value="ECO:0007669"/>
    <property type="project" value="UniProtKB-KW"/>
</dbReference>
<dbReference type="GO" id="GO:0051321">
    <property type="term" value="P:meiotic cell cycle"/>
    <property type="evidence" value="ECO:0000250"/>
    <property type="project" value="UniProtKB"/>
</dbReference>
<dbReference type="GO" id="GO:0072423">
    <property type="term" value="P:response to DNA damage checkpoint signaling"/>
    <property type="evidence" value="ECO:0000250"/>
    <property type="project" value="UniProtKB"/>
</dbReference>
<dbReference type="GO" id="GO:0009314">
    <property type="term" value="P:response to radiation"/>
    <property type="evidence" value="ECO:0000250"/>
    <property type="project" value="UniProtKB"/>
</dbReference>
<dbReference type="GO" id="GO:0007062">
    <property type="term" value="P:sister chromatid cohesion"/>
    <property type="evidence" value="ECO:0000318"/>
    <property type="project" value="GO_Central"/>
</dbReference>
<dbReference type="CDD" id="cd03275">
    <property type="entry name" value="ABC_SMC1_euk"/>
    <property type="match status" value="2"/>
</dbReference>
<dbReference type="FunFam" id="1.20.1060.20:FF:000001">
    <property type="entry name" value="Structural maintenance of chromosomes 1A"/>
    <property type="match status" value="1"/>
</dbReference>
<dbReference type="FunFam" id="3.40.50.300:FF:000564">
    <property type="entry name" value="Structural maintenance of chromosomes 1A"/>
    <property type="match status" value="1"/>
</dbReference>
<dbReference type="FunFam" id="3.30.70.1620:FF:000001">
    <property type="entry name" value="Structural maintenance of chromosomes 1B"/>
    <property type="match status" value="1"/>
</dbReference>
<dbReference type="FunFam" id="3.40.50.300:FF:000562">
    <property type="entry name" value="Structural maintenance of chromosomes protein"/>
    <property type="match status" value="1"/>
</dbReference>
<dbReference type="Gene3D" id="1.20.1060.20">
    <property type="match status" value="1"/>
</dbReference>
<dbReference type="Gene3D" id="3.30.70.1620">
    <property type="match status" value="1"/>
</dbReference>
<dbReference type="Gene3D" id="3.40.50.300">
    <property type="entry name" value="P-loop containing nucleotide triphosphate hydrolases"/>
    <property type="match status" value="2"/>
</dbReference>
<dbReference type="InterPro" id="IPR027417">
    <property type="entry name" value="P-loop_NTPase"/>
</dbReference>
<dbReference type="InterPro" id="IPR003395">
    <property type="entry name" value="RecF/RecN/SMC_N"/>
</dbReference>
<dbReference type="InterPro" id="IPR024704">
    <property type="entry name" value="SMC"/>
</dbReference>
<dbReference type="InterPro" id="IPR028468">
    <property type="entry name" value="Smc1_ABC"/>
</dbReference>
<dbReference type="InterPro" id="IPR010935">
    <property type="entry name" value="SMC_hinge"/>
</dbReference>
<dbReference type="InterPro" id="IPR036277">
    <property type="entry name" value="SMC_hinge_sf"/>
</dbReference>
<dbReference type="PANTHER" id="PTHR18937:SF170">
    <property type="entry name" value="STRUCTURAL MAINTENANCE OF CHROMOSOMES PROTEIN 1A"/>
    <property type="match status" value="1"/>
</dbReference>
<dbReference type="PANTHER" id="PTHR18937">
    <property type="entry name" value="STRUCTURAL MAINTENANCE OF CHROMOSOMES SMC FAMILY MEMBER"/>
    <property type="match status" value="1"/>
</dbReference>
<dbReference type="Pfam" id="PF06470">
    <property type="entry name" value="SMC_hinge"/>
    <property type="match status" value="1"/>
</dbReference>
<dbReference type="Pfam" id="PF02463">
    <property type="entry name" value="SMC_N"/>
    <property type="match status" value="1"/>
</dbReference>
<dbReference type="PIRSF" id="PIRSF005719">
    <property type="entry name" value="SMC"/>
    <property type="match status" value="1"/>
</dbReference>
<dbReference type="SMART" id="SM00968">
    <property type="entry name" value="SMC_hinge"/>
    <property type="match status" value="1"/>
</dbReference>
<dbReference type="SUPFAM" id="SSF52540">
    <property type="entry name" value="P-loop containing nucleoside triphosphate hydrolases"/>
    <property type="match status" value="1"/>
</dbReference>
<dbReference type="SUPFAM" id="SSF75553">
    <property type="entry name" value="Smc hinge domain"/>
    <property type="match status" value="1"/>
</dbReference>
<proteinExistence type="evidence at protein level"/>
<protein>
    <recommendedName>
        <fullName>Structural maintenance of chromosomes protein 1A</fullName>
        <shortName>SMC protein 1A</shortName>
        <shortName>SMC-1A</shortName>
    </recommendedName>
</protein>
<comment type="function">
    <text evidence="1">Involved in chromosome cohesion during cell cycle and in DNA repair. Involved in DNA repair via its interaction with BRCA1 and its related phosphorylation by ATM, and works as a downstream effector in the ATM/NBS1 branch of S-phase checkpoint (By similarity). Central component of cohesin complex. The cohesin complex is required for the cohesion of sister chromatids after DNA replication. The cohesin complex apparently forms a large proteinaceous ring within which sister chromatids can be trapped. At anaphase, the complex is cleaved and dissociates from chromatin, allowing sister chromatids to segregate. The cohesin complex may also play a role in spindle pole assembly during mitosis. Involved in DNA repair via its interaction with BRCA1 and its related phosphorylation by ATM, or via its phosphorylation by ATR. Works as a downstream effector both in the ATM/NBS1 branch and in the ATR/MSH2 branch of S-phase checkpoint.</text>
</comment>
<comment type="subunit">
    <text evidence="2 3 4 7 8 9">Forms a heterodimer with SMC3 in cohesin complexes (PubMed:10072753). Cohesin complexes are composed of the SMC1 (SMC1A or meiosis-specific SMC1B) and SMC3 heterodimer attached via their SMC hinge domain, RAD21 which link them, and one STAG protein (STAG1, STAG2 or meiosis-specific STAG3), which interacts with RAD21. In germ cell cohesin complexes, SMC1A is mutually exclusive with SMC1B. Found in a complex with CDCA5, SMC3 and RAD21, PDS5A/SCC-112 and PDS5B/APRIN. Interacts with NDC80, SYCP2, STAG3, BRCA1 and BRAT1. The cohesin complex interacts with the cohesin loading complex subunits NIPBL/Scc2 (via HEAT repeats) and MAU2/Scc4. NIPBL directly contacts all members of the complex, RAD21, SMC1A/B, SMC3 and STAG1 (By similarity). Interacts with RPGR (PubMed:16043481). Found in a complex containing POLE and SMC3 (PubMed:8670910).</text>
</comment>
<comment type="subcellular location">
    <subcellularLocation>
        <location>Nucleus</location>
    </subcellularLocation>
    <subcellularLocation>
        <location>Chromosome</location>
    </subcellularLocation>
    <subcellularLocation>
        <location>Chromosome</location>
        <location>Centromere</location>
    </subcellularLocation>
    <text evidence="1">Associates with chromatin. The phosphorylated form on Ser-957 and Ser-966 associates with chromatin during G1/S/G2 phases but not during M phase, suggesting that phosphorylation does not regulate cohesin function (By similarity). Before prophase it is scattered along chromosome arms. During prophase, most of cohesin complexes dissociate from chromatin probably because of phosphorylation by PLK, except at centromeres, where cohesin complexes remain. At anaphase, the RAD21 subunit of the cohesin complex is cleaved, leading to the dissociation of the complex from chromosomes, allowing chromosome separation. In germ cells, cohesin complex dissociates from chromatin at prophase I, and may be replaced by a meiosis-specific cohesin complex.</text>
</comment>
<comment type="domain">
    <text evidence="1">The flexible SMC hinge domain, which separates the large intramolecular coiled coil regions, allows the heterotypic interaction with the corresponding domain of SMC3, forming a V-shaped heterodimer. The two heads of the heterodimer are then connected by different ends of the cleavable RAD21 protein, forming a ring structure (By similarity).</text>
</comment>
<comment type="PTM">
    <text evidence="2">Phosphorylated upon ionizing radiation or DNA methylation. Phosphorylation of Ser-957 and Ser-966 activates it and is required for S-phase checkpoint activation (By similarity).</text>
</comment>
<comment type="PTM">
    <text evidence="2">Ubiquitinated by the DCX(DCAF15) complex, leading to its degradation.</text>
</comment>
<comment type="similarity">
    <text evidence="10">Belongs to the SMC family. SMC1 subfamily.</text>
</comment>
<reference key="1">
    <citation type="journal article" date="1999" name="Gene">
        <title>Cloning and characterization of mammalian SMC1 and SMC3 genes and proteins, components of the DNA recombination complexes RC-1.</title>
        <authorList>
            <person name="Stursberg S."/>
            <person name="Riwar B."/>
            <person name="Jessberger R."/>
        </authorList>
    </citation>
    <scope>NUCLEOTIDE SEQUENCE [MRNA]</scope>
    <scope>CHARACTERIZATION</scope>
    <scope>INTERACTION WITH SMC3</scope>
</reference>
<reference key="2">
    <citation type="journal article" date="1996" name="EMBO J.">
        <title>SMC proteins constitute two subunits of the mammalian recombination complex RC-1.</title>
        <authorList>
            <person name="Jessberger R."/>
            <person name="Riwar B."/>
            <person name="Baechtold H."/>
            <person name="Akhmedov A.T."/>
        </authorList>
    </citation>
    <scope>PROTEIN SEQUENCE OF 1-20</scope>
    <scope>IDENTIFICATION IN A COMPLEX WITH SMC3 AND POLE</scope>
</reference>
<reference key="3">
    <citation type="journal article" date="2005" name="J. Biol. Chem.">
        <title>RPGR-ORF15, which is mutated in retinitis pigmentosa, associates with SMC1, SMC3, and microtubule transport proteins.</title>
        <authorList>
            <person name="Khanna H."/>
            <person name="Hurd T.W."/>
            <person name="Lillo C."/>
            <person name="Shu X."/>
            <person name="Parapuram S.K."/>
            <person name="He S."/>
            <person name="Akimoto M."/>
            <person name="Wright A.F."/>
            <person name="Margolis B."/>
            <person name="Williams D.S."/>
            <person name="Swaroop A."/>
        </authorList>
    </citation>
    <scope>INTERACTION WITH RPGR</scope>
    <scope>MUTAGENESIS OF SER-957 AND SER-966</scope>
</reference>
<accession>O97593</accession>
<keyword id="KW-0007">Acetylation</keyword>
<keyword id="KW-0067">ATP-binding</keyword>
<keyword id="KW-0131">Cell cycle</keyword>
<keyword id="KW-0132">Cell division</keyword>
<keyword id="KW-0137">Centromere</keyword>
<keyword id="KW-0158">Chromosome</keyword>
<keyword id="KW-0175">Coiled coil</keyword>
<keyword id="KW-0903">Direct protein sequencing</keyword>
<keyword id="KW-0227">DNA damage</keyword>
<keyword id="KW-0234">DNA repair</keyword>
<keyword id="KW-0469">Meiosis</keyword>
<keyword id="KW-0498">Mitosis</keyword>
<keyword id="KW-0547">Nucleotide-binding</keyword>
<keyword id="KW-0539">Nucleus</keyword>
<keyword id="KW-0597">Phosphoprotein</keyword>
<keyword id="KW-1185">Reference proteome</keyword>
<keyword id="KW-0832">Ubl conjugation</keyword>
<feature type="chain" id="PRO_0000118988" description="Structural maintenance of chromosomes protein 1A">
    <location>
        <begin position="1"/>
        <end position="1233"/>
    </location>
</feature>
<feature type="domain" description="SMC hinge">
    <location>
        <begin position="515"/>
        <end position="629"/>
    </location>
</feature>
<feature type="region of interest" description="Disordered" evidence="6">
    <location>
        <begin position="284"/>
        <end position="308"/>
    </location>
</feature>
<feature type="region of interest" description="Disordered" evidence="6">
    <location>
        <begin position="348"/>
        <end position="369"/>
    </location>
</feature>
<feature type="region of interest" description="Disordered" evidence="6">
    <location>
        <begin position="947"/>
        <end position="968"/>
    </location>
</feature>
<feature type="coiled-coil region" evidence="5">
    <location>
        <begin position="104"/>
        <end position="124"/>
    </location>
</feature>
<feature type="coiled-coil region" evidence="5">
    <location>
        <begin position="163"/>
        <end position="503"/>
    </location>
</feature>
<feature type="coiled-coil region" evidence="5">
    <location>
        <begin position="660"/>
        <end position="935"/>
    </location>
</feature>
<feature type="coiled-coil region" evidence="5">
    <location>
        <begin position="991"/>
        <end position="1068"/>
    </location>
</feature>
<feature type="compositionally biased region" description="Basic and acidic residues" evidence="6">
    <location>
        <begin position="284"/>
        <end position="293"/>
    </location>
</feature>
<feature type="compositionally biased region" description="Low complexity" evidence="6">
    <location>
        <begin position="953"/>
        <end position="967"/>
    </location>
</feature>
<feature type="binding site" evidence="5">
    <location>
        <begin position="32"/>
        <end position="39"/>
    </location>
    <ligand>
        <name>ATP</name>
        <dbReference type="ChEBI" id="CHEBI:30616"/>
    </ligand>
</feature>
<feature type="modified residue" description="Phosphoserine" evidence="2">
    <location>
        <position position="358"/>
    </location>
</feature>
<feature type="modified residue" description="Phosphoserine" evidence="2">
    <location>
        <position position="360"/>
    </location>
</feature>
<feature type="modified residue" description="N6-acetyllysine" evidence="2">
    <location>
        <position position="648"/>
    </location>
</feature>
<feature type="modified residue" description="N6-acetyllysine" evidence="2">
    <location>
        <position position="713"/>
    </location>
</feature>
<feature type="modified residue" description="Phosphoserine" evidence="2">
    <location>
        <position position="957"/>
    </location>
</feature>
<feature type="modified residue" description="Phosphoserine" evidence="2">
    <location>
        <position position="962"/>
    </location>
</feature>
<feature type="modified residue" description="Phosphoserine" evidence="2">
    <location>
        <position position="966"/>
    </location>
</feature>
<feature type="modified residue" description="Phosphoserine" evidence="2">
    <location>
        <position position="970"/>
    </location>
</feature>
<feature type="modified residue" description="N6-acetyllysine" evidence="3">
    <location>
        <position position="1037"/>
    </location>
</feature>
<feature type="mutagenesis site" description="No effect on interaction with RPGR." evidence="8">
    <original>S</original>
    <variation>A</variation>
    <location>
        <position position="957"/>
    </location>
</feature>
<feature type="mutagenesis site" description="Abolishes binding with RPGR." evidence="8">
    <original>S</original>
    <variation>A</variation>
    <location>
        <position position="966"/>
    </location>
</feature>